<evidence type="ECO:0000255" key="1">
    <source>
        <dbReference type="HAMAP-Rule" id="MF_00376"/>
    </source>
</evidence>
<feature type="chain" id="PRO_0000173030" description="Dephospho-CoA kinase">
    <location>
        <begin position="1"/>
        <end position="202"/>
    </location>
</feature>
<feature type="domain" description="DPCK" evidence="1">
    <location>
        <begin position="4"/>
        <end position="201"/>
    </location>
</feature>
<feature type="binding site" evidence="1">
    <location>
        <begin position="12"/>
        <end position="17"/>
    </location>
    <ligand>
        <name>ATP</name>
        <dbReference type="ChEBI" id="CHEBI:30616"/>
    </ligand>
</feature>
<sequence length="202" mass="22562">MALVIGLTGGIASGKTTVANLFQQHFAIDIVDADIVARQVVAPGSAGLAAIVDHFGADILTREGELDRGQLRQRIFAHAEEKQWLNALLHPMIRRKMIEDLAQVSSPYALLVVPLLVENQLQTLCDRVLVVDVEEKTQLQRTMDRDGVDEQQVRAILKAQASRHERLALADDVIKNESKDQDLLQQITDLHQKYLAMSKQNR</sequence>
<gene>
    <name evidence="1" type="primary">coaE</name>
    <name type="ordered locus">VV2782</name>
</gene>
<keyword id="KW-0067">ATP-binding</keyword>
<keyword id="KW-0173">Coenzyme A biosynthesis</keyword>
<keyword id="KW-0963">Cytoplasm</keyword>
<keyword id="KW-0418">Kinase</keyword>
<keyword id="KW-0547">Nucleotide-binding</keyword>
<keyword id="KW-0808">Transferase</keyword>
<proteinExistence type="inferred from homology"/>
<name>COAE_VIBVY</name>
<comment type="function">
    <text evidence="1">Catalyzes the phosphorylation of the 3'-hydroxyl group of dephosphocoenzyme A to form coenzyme A.</text>
</comment>
<comment type="catalytic activity">
    <reaction evidence="1">
        <text>3'-dephospho-CoA + ATP = ADP + CoA + H(+)</text>
        <dbReference type="Rhea" id="RHEA:18245"/>
        <dbReference type="ChEBI" id="CHEBI:15378"/>
        <dbReference type="ChEBI" id="CHEBI:30616"/>
        <dbReference type="ChEBI" id="CHEBI:57287"/>
        <dbReference type="ChEBI" id="CHEBI:57328"/>
        <dbReference type="ChEBI" id="CHEBI:456216"/>
        <dbReference type="EC" id="2.7.1.24"/>
    </reaction>
</comment>
<comment type="pathway">
    <text evidence="1">Cofactor biosynthesis; coenzyme A biosynthesis; CoA from (R)-pantothenate: step 5/5.</text>
</comment>
<comment type="subcellular location">
    <subcellularLocation>
        <location evidence="1">Cytoplasm</location>
    </subcellularLocation>
</comment>
<comment type="similarity">
    <text evidence="1">Belongs to the CoaE family.</text>
</comment>
<accession>Q7MHT5</accession>
<organism>
    <name type="scientific">Vibrio vulnificus (strain YJ016)</name>
    <dbReference type="NCBI Taxonomy" id="196600"/>
    <lineage>
        <taxon>Bacteria</taxon>
        <taxon>Pseudomonadati</taxon>
        <taxon>Pseudomonadota</taxon>
        <taxon>Gammaproteobacteria</taxon>
        <taxon>Vibrionales</taxon>
        <taxon>Vibrionaceae</taxon>
        <taxon>Vibrio</taxon>
    </lineage>
</organism>
<dbReference type="EC" id="2.7.1.24" evidence="1"/>
<dbReference type="EMBL" id="BA000037">
    <property type="protein sequence ID" value="BAC95546.1"/>
    <property type="molecule type" value="Genomic_DNA"/>
</dbReference>
<dbReference type="RefSeq" id="WP_011151132.1">
    <property type="nucleotide sequence ID" value="NC_005139.1"/>
</dbReference>
<dbReference type="SMR" id="Q7MHT5"/>
<dbReference type="STRING" id="672.VV93_v1c24930"/>
<dbReference type="KEGG" id="vvy:VV2782"/>
<dbReference type="PATRIC" id="fig|196600.6.peg.2773"/>
<dbReference type="eggNOG" id="COG0237">
    <property type="taxonomic scope" value="Bacteria"/>
</dbReference>
<dbReference type="HOGENOM" id="CLU_057180_1_2_6"/>
<dbReference type="UniPathway" id="UPA00241">
    <property type="reaction ID" value="UER00356"/>
</dbReference>
<dbReference type="Proteomes" id="UP000002675">
    <property type="component" value="Chromosome I"/>
</dbReference>
<dbReference type="GO" id="GO:0005737">
    <property type="term" value="C:cytoplasm"/>
    <property type="evidence" value="ECO:0007669"/>
    <property type="project" value="UniProtKB-SubCell"/>
</dbReference>
<dbReference type="GO" id="GO:0005524">
    <property type="term" value="F:ATP binding"/>
    <property type="evidence" value="ECO:0007669"/>
    <property type="project" value="UniProtKB-UniRule"/>
</dbReference>
<dbReference type="GO" id="GO:0004140">
    <property type="term" value="F:dephospho-CoA kinase activity"/>
    <property type="evidence" value="ECO:0007669"/>
    <property type="project" value="UniProtKB-UniRule"/>
</dbReference>
<dbReference type="GO" id="GO:0015937">
    <property type="term" value="P:coenzyme A biosynthetic process"/>
    <property type="evidence" value="ECO:0007669"/>
    <property type="project" value="UniProtKB-UniRule"/>
</dbReference>
<dbReference type="CDD" id="cd02022">
    <property type="entry name" value="DPCK"/>
    <property type="match status" value="1"/>
</dbReference>
<dbReference type="FunFam" id="3.40.50.300:FF:000518">
    <property type="entry name" value="Dephospho-CoA kinase"/>
    <property type="match status" value="1"/>
</dbReference>
<dbReference type="Gene3D" id="3.40.50.300">
    <property type="entry name" value="P-loop containing nucleotide triphosphate hydrolases"/>
    <property type="match status" value="1"/>
</dbReference>
<dbReference type="HAMAP" id="MF_00376">
    <property type="entry name" value="Dephospho_CoA_kinase"/>
    <property type="match status" value="1"/>
</dbReference>
<dbReference type="InterPro" id="IPR001977">
    <property type="entry name" value="Depp_CoAkinase"/>
</dbReference>
<dbReference type="InterPro" id="IPR027417">
    <property type="entry name" value="P-loop_NTPase"/>
</dbReference>
<dbReference type="NCBIfam" id="TIGR00152">
    <property type="entry name" value="dephospho-CoA kinase"/>
    <property type="match status" value="1"/>
</dbReference>
<dbReference type="PANTHER" id="PTHR10695:SF46">
    <property type="entry name" value="BIFUNCTIONAL COENZYME A SYNTHASE-RELATED"/>
    <property type="match status" value="1"/>
</dbReference>
<dbReference type="PANTHER" id="PTHR10695">
    <property type="entry name" value="DEPHOSPHO-COA KINASE-RELATED"/>
    <property type="match status" value="1"/>
</dbReference>
<dbReference type="Pfam" id="PF01121">
    <property type="entry name" value="CoaE"/>
    <property type="match status" value="1"/>
</dbReference>
<dbReference type="SUPFAM" id="SSF52540">
    <property type="entry name" value="P-loop containing nucleoside triphosphate hydrolases"/>
    <property type="match status" value="1"/>
</dbReference>
<dbReference type="PROSITE" id="PS51219">
    <property type="entry name" value="DPCK"/>
    <property type="match status" value="1"/>
</dbReference>
<protein>
    <recommendedName>
        <fullName evidence="1">Dephospho-CoA kinase</fullName>
        <ecNumber evidence="1">2.7.1.24</ecNumber>
    </recommendedName>
    <alternativeName>
        <fullName evidence="1">Dephosphocoenzyme A kinase</fullName>
    </alternativeName>
</protein>
<reference key="1">
    <citation type="journal article" date="2003" name="Genome Res.">
        <title>Comparative genome analysis of Vibrio vulnificus, a marine pathogen.</title>
        <authorList>
            <person name="Chen C.-Y."/>
            <person name="Wu K.-M."/>
            <person name="Chang Y.-C."/>
            <person name="Chang C.-H."/>
            <person name="Tsai H.-C."/>
            <person name="Liao T.-L."/>
            <person name="Liu Y.-M."/>
            <person name="Chen H.-J."/>
            <person name="Shen A.B.-T."/>
            <person name="Li J.-C."/>
            <person name="Su T.-L."/>
            <person name="Shao C.-P."/>
            <person name="Lee C.-T."/>
            <person name="Hor L.-I."/>
            <person name="Tsai S.-F."/>
        </authorList>
    </citation>
    <scope>NUCLEOTIDE SEQUENCE [LARGE SCALE GENOMIC DNA]</scope>
    <source>
        <strain>YJ016</strain>
    </source>
</reference>